<name>RS19_META1</name>
<sequence length="91" mass="10305">MARSLKKAPFVYDHLMKKVVAILENKSPKRPIKTWSRRSTIYPDFIGLTFQVHNGKAFIDVFVTNDMVGHKLGEFAPTRTFSGHGADKGKK</sequence>
<feature type="chain" id="PRO_1000128005" description="Small ribosomal subunit protein uS19">
    <location>
        <begin position="1"/>
        <end position="91"/>
    </location>
</feature>
<dbReference type="EMBL" id="CP001047">
    <property type="protein sequence ID" value="ACF07295.1"/>
    <property type="molecule type" value="Genomic_DNA"/>
</dbReference>
<dbReference type="RefSeq" id="WP_012498252.1">
    <property type="nucleotide sequence ID" value="NC_011025.1"/>
</dbReference>
<dbReference type="SMR" id="B3PMP3"/>
<dbReference type="STRING" id="243272.MARTH_orf439"/>
<dbReference type="KEGG" id="mat:MARTH_orf439"/>
<dbReference type="eggNOG" id="COG0185">
    <property type="taxonomic scope" value="Bacteria"/>
</dbReference>
<dbReference type="HOGENOM" id="CLU_144911_0_1_14"/>
<dbReference type="Proteomes" id="UP000008812">
    <property type="component" value="Chromosome"/>
</dbReference>
<dbReference type="GO" id="GO:0005737">
    <property type="term" value="C:cytoplasm"/>
    <property type="evidence" value="ECO:0007669"/>
    <property type="project" value="UniProtKB-ARBA"/>
</dbReference>
<dbReference type="GO" id="GO:0015935">
    <property type="term" value="C:small ribosomal subunit"/>
    <property type="evidence" value="ECO:0007669"/>
    <property type="project" value="InterPro"/>
</dbReference>
<dbReference type="GO" id="GO:0019843">
    <property type="term" value="F:rRNA binding"/>
    <property type="evidence" value="ECO:0007669"/>
    <property type="project" value="UniProtKB-UniRule"/>
</dbReference>
<dbReference type="GO" id="GO:0003735">
    <property type="term" value="F:structural constituent of ribosome"/>
    <property type="evidence" value="ECO:0007669"/>
    <property type="project" value="InterPro"/>
</dbReference>
<dbReference type="GO" id="GO:0000028">
    <property type="term" value="P:ribosomal small subunit assembly"/>
    <property type="evidence" value="ECO:0007669"/>
    <property type="project" value="TreeGrafter"/>
</dbReference>
<dbReference type="GO" id="GO:0006412">
    <property type="term" value="P:translation"/>
    <property type="evidence" value="ECO:0007669"/>
    <property type="project" value="UniProtKB-UniRule"/>
</dbReference>
<dbReference type="FunFam" id="3.30.860.10:FF:000001">
    <property type="entry name" value="30S ribosomal protein S19"/>
    <property type="match status" value="1"/>
</dbReference>
<dbReference type="Gene3D" id="3.30.860.10">
    <property type="entry name" value="30s Ribosomal Protein S19, Chain A"/>
    <property type="match status" value="1"/>
</dbReference>
<dbReference type="HAMAP" id="MF_00531">
    <property type="entry name" value="Ribosomal_uS19"/>
    <property type="match status" value="1"/>
</dbReference>
<dbReference type="InterPro" id="IPR002222">
    <property type="entry name" value="Ribosomal_uS19"/>
</dbReference>
<dbReference type="InterPro" id="IPR005732">
    <property type="entry name" value="Ribosomal_uS19_bac-type"/>
</dbReference>
<dbReference type="InterPro" id="IPR020934">
    <property type="entry name" value="Ribosomal_uS19_CS"/>
</dbReference>
<dbReference type="InterPro" id="IPR023575">
    <property type="entry name" value="Ribosomal_uS19_SF"/>
</dbReference>
<dbReference type="NCBIfam" id="TIGR01050">
    <property type="entry name" value="rpsS_bact"/>
    <property type="match status" value="1"/>
</dbReference>
<dbReference type="PANTHER" id="PTHR11880">
    <property type="entry name" value="RIBOSOMAL PROTEIN S19P FAMILY MEMBER"/>
    <property type="match status" value="1"/>
</dbReference>
<dbReference type="PANTHER" id="PTHR11880:SF8">
    <property type="entry name" value="SMALL RIBOSOMAL SUBUNIT PROTEIN US19M"/>
    <property type="match status" value="1"/>
</dbReference>
<dbReference type="Pfam" id="PF00203">
    <property type="entry name" value="Ribosomal_S19"/>
    <property type="match status" value="1"/>
</dbReference>
<dbReference type="PIRSF" id="PIRSF002144">
    <property type="entry name" value="Ribosomal_S19"/>
    <property type="match status" value="1"/>
</dbReference>
<dbReference type="PRINTS" id="PR00975">
    <property type="entry name" value="RIBOSOMALS19"/>
</dbReference>
<dbReference type="SUPFAM" id="SSF54570">
    <property type="entry name" value="Ribosomal protein S19"/>
    <property type="match status" value="1"/>
</dbReference>
<dbReference type="PROSITE" id="PS00323">
    <property type="entry name" value="RIBOSOMAL_S19"/>
    <property type="match status" value="1"/>
</dbReference>
<evidence type="ECO:0000255" key="1">
    <source>
        <dbReference type="HAMAP-Rule" id="MF_00531"/>
    </source>
</evidence>
<evidence type="ECO:0000305" key="2"/>
<proteinExistence type="inferred from homology"/>
<accession>B3PMP3</accession>
<keyword id="KW-1185">Reference proteome</keyword>
<keyword id="KW-0687">Ribonucleoprotein</keyword>
<keyword id="KW-0689">Ribosomal protein</keyword>
<keyword id="KW-0694">RNA-binding</keyword>
<keyword id="KW-0699">rRNA-binding</keyword>
<protein>
    <recommendedName>
        <fullName evidence="1">Small ribosomal subunit protein uS19</fullName>
    </recommendedName>
    <alternativeName>
        <fullName evidence="2">30S ribosomal protein S19</fullName>
    </alternativeName>
</protein>
<organism>
    <name type="scientific">Metamycoplasma arthritidis (strain 158L3-1)</name>
    <name type="common">Mycoplasma arthritidis</name>
    <dbReference type="NCBI Taxonomy" id="243272"/>
    <lineage>
        <taxon>Bacteria</taxon>
        <taxon>Bacillati</taxon>
        <taxon>Mycoplasmatota</taxon>
        <taxon>Mycoplasmoidales</taxon>
        <taxon>Metamycoplasmataceae</taxon>
        <taxon>Metamycoplasma</taxon>
    </lineage>
</organism>
<reference key="1">
    <citation type="journal article" date="2008" name="Infect. Immun.">
        <title>Genome of Mycoplasma arthritidis.</title>
        <authorList>
            <person name="Dybvig K."/>
            <person name="Zuhua C."/>
            <person name="Lao P."/>
            <person name="Jordan D.S."/>
            <person name="French C.T."/>
            <person name="Tu A.H."/>
            <person name="Loraine A.E."/>
        </authorList>
    </citation>
    <scope>NUCLEOTIDE SEQUENCE [LARGE SCALE GENOMIC DNA]</scope>
    <source>
        <strain>158L3-1</strain>
    </source>
</reference>
<comment type="function">
    <text evidence="1">Protein S19 forms a complex with S13 that binds strongly to the 16S ribosomal RNA.</text>
</comment>
<comment type="similarity">
    <text evidence="1">Belongs to the universal ribosomal protein uS19 family.</text>
</comment>
<gene>
    <name evidence="1" type="primary">rpsS</name>
    <name type="ordered locus">MARTH_orf439</name>
</gene>